<evidence type="ECO:0000250" key="1"/>
<evidence type="ECO:0000250" key="2">
    <source>
        <dbReference type="UniProtKB" id="P37840"/>
    </source>
</evidence>
<evidence type="ECO:0000256" key="3">
    <source>
        <dbReference type="SAM" id="MobiDB-lite"/>
    </source>
</evidence>
<evidence type="ECO:0000305" key="4"/>
<name>SYUA_SERCA</name>
<protein>
    <recommendedName>
        <fullName>Alpha-synuclein</fullName>
    </recommendedName>
    <alternativeName>
        <fullName>Synelfin</fullName>
    </alternativeName>
</protein>
<accession>Q91448</accession>
<dbReference type="EMBL" id="L33860">
    <property type="protein sequence ID" value="AAA93538.1"/>
    <property type="molecule type" value="mRNA"/>
</dbReference>
<dbReference type="RefSeq" id="NP_001289028.1">
    <property type="nucleotide sequence ID" value="NM_001302099.1"/>
</dbReference>
<dbReference type="RefSeq" id="XP_030094568.1">
    <property type="nucleotide sequence ID" value="XM_030238708.2"/>
</dbReference>
<dbReference type="Ensembl" id="ENSSCAT00000022424.1">
    <property type="protein sequence ID" value="ENSSCAP00000020085.1"/>
    <property type="gene ID" value="ENSSCAG00000014487.1"/>
</dbReference>
<dbReference type="GeneID" id="103826045"/>
<dbReference type="KEGG" id="scan:103826045"/>
<dbReference type="CTD" id="6622"/>
<dbReference type="GeneTree" id="ENSGT00950000183175"/>
<dbReference type="OMA" id="LPQEGMM"/>
<dbReference type="OrthoDB" id="9900372at2759"/>
<dbReference type="Proteomes" id="UP000694409">
    <property type="component" value="Unassembled WGS sequence"/>
</dbReference>
<dbReference type="GO" id="GO:0015629">
    <property type="term" value="C:actin cytoskeleton"/>
    <property type="evidence" value="ECO:0007669"/>
    <property type="project" value="Ensembl"/>
</dbReference>
<dbReference type="GO" id="GO:0043679">
    <property type="term" value="C:axon terminus"/>
    <property type="evidence" value="ECO:0007669"/>
    <property type="project" value="Ensembl"/>
</dbReference>
<dbReference type="GO" id="GO:0005938">
    <property type="term" value="C:cell cortex"/>
    <property type="evidence" value="ECO:0007669"/>
    <property type="project" value="Ensembl"/>
</dbReference>
<dbReference type="GO" id="GO:0005829">
    <property type="term" value="C:cytosol"/>
    <property type="evidence" value="ECO:0007669"/>
    <property type="project" value="UniProtKB-SubCell"/>
</dbReference>
<dbReference type="GO" id="GO:0005615">
    <property type="term" value="C:extracellular space"/>
    <property type="evidence" value="ECO:0007669"/>
    <property type="project" value="Ensembl"/>
</dbReference>
<dbReference type="GO" id="GO:0030426">
    <property type="term" value="C:growth cone"/>
    <property type="evidence" value="ECO:0007669"/>
    <property type="project" value="Ensembl"/>
</dbReference>
<dbReference type="GO" id="GO:0016234">
    <property type="term" value="C:inclusion body"/>
    <property type="evidence" value="ECO:0007669"/>
    <property type="project" value="Ensembl"/>
</dbReference>
<dbReference type="GO" id="GO:0005739">
    <property type="term" value="C:mitochondrion"/>
    <property type="evidence" value="ECO:0007669"/>
    <property type="project" value="GOC"/>
</dbReference>
<dbReference type="GO" id="GO:0043025">
    <property type="term" value="C:neuronal cell body"/>
    <property type="evidence" value="ECO:0007669"/>
    <property type="project" value="Ensembl"/>
</dbReference>
<dbReference type="GO" id="GO:0005634">
    <property type="term" value="C:nucleus"/>
    <property type="evidence" value="ECO:0007669"/>
    <property type="project" value="UniProtKB-SubCell"/>
</dbReference>
<dbReference type="GO" id="GO:0048471">
    <property type="term" value="C:perinuclear region of cytoplasm"/>
    <property type="evidence" value="ECO:0007669"/>
    <property type="project" value="Ensembl"/>
</dbReference>
<dbReference type="GO" id="GO:0005886">
    <property type="term" value="C:plasma membrane"/>
    <property type="evidence" value="ECO:0007669"/>
    <property type="project" value="Ensembl"/>
</dbReference>
<dbReference type="GO" id="GO:0031092">
    <property type="term" value="C:platelet alpha granule membrane"/>
    <property type="evidence" value="ECO:0007669"/>
    <property type="project" value="Ensembl"/>
</dbReference>
<dbReference type="GO" id="GO:0098794">
    <property type="term" value="C:postsynapse"/>
    <property type="evidence" value="ECO:0007669"/>
    <property type="project" value="GOC"/>
</dbReference>
<dbReference type="GO" id="GO:0032991">
    <property type="term" value="C:protein-containing complex"/>
    <property type="evidence" value="ECO:0007669"/>
    <property type="project" value="Ensembl"/>
</dbReference>
<dbReference type="GO" id="GO:0099512">
    <property type="term" value="C:supramolecular fiber"/>
    <property type="evidence" value="ECO:0007669"/>
    <property type="project" value="Ensembl"/>
</dbReference>
<dbReference type="GO" id="GO:0030672">
    <property type="term" value="C:synaptic vesicle membrane"/>
    <property type="evidence" value="ECO:0007669"/>
    <property type="project" value="Ensembl"/>
</dbReference>
<dbReference type="GO" id="GO:0003779">
    <property type="term" value="F:actin binding"/>
    <property type="evidence" value="ECO:0007669"/>
    <property type="project" value="Ensembl"/>
</dbReference>
<dbReference type="GO" id="GO:0043014">
    <property type="term" value="F:alpha-tubulin binding"/>
    <property type="evidence" value="ECO:0007669"/>
    <property type="project" value="Ensembl"/>
</dbReference>
<dbReference type="GO" id="GO:0050544">
    <property type="term" value="F:arachidonate binding"/>
    <property type="evidence" value="ECO:0007669"/>
    <property type="project" value="Ensembl"/>
</dbReference>
<dbReference type="GO" id="GO:0005509">
    <property type="term" value="F:calcium ion binding"/>
    <property type="evidence" value="ECO:0007669"/>
    <property type="project" value="Ensembl"/>
</dbReference>
<dbReference type="GO" id="GO:0005507">
    <property type="term" value="F:copper ion binding"/>
    <property type="evidence" value="ECO:0000250"/>
    <property type="project" value="UniProtKB"/>
</dbReference>
<dbReference type="GO" id="GO:1903136">
    <property type="term" value="F:cuprous ion binding"/>
    <property type="evidence" value="ECO:0007669"/>
    <property type="project" value="Ensembl"/>
</dbReference>
<dbReference type="GO" id="GO:0004869">
    <property type="term" value="F:cysteine-type endopeptidase inhibitor activity"/>
    <property type="evidence" value="ECO:0007669"/>
    <property type="project" value="Ensembl"/>
</dbReference>
<dbReference type="GO" id="GO:0070840">
    <property type="term" value="F:dynein complex binding"/>
    <property type="evidence" value="ECO:0007669"/>
    <property type="project" value="Ensembl"/>
</dbReference>
<dbReference type="GO" id="GO:0008198">
    <property type="term" value="F:ferrous iron binding"/>
    <property type="evidence" value="ECO:0007669"/>
    <property type="project" value="Ensembl"/>
</dbReference>
<dbReference type="GO" id="GO:0042393">
    <property type="term" value="F:histone binding"/>
    <property type="evidence" value="ECO:0007669"/>
    <property type="project" value="Ensembl"/>
</dbReference>
<dbReference type="GO" id="GO:0030544">
    <property type="term" value="F:Hsp70 protein binding"/>
    <property type="evidence" value="ECO:0007669"/>
    <property type="project" value="Ensembl"/>
</dbReference>
<dbReference type="GO" id="GO:0042802">
    <property type="term" value="F:identical protein binding"/>
    <property type="evidence" value="ECO:0007669"/>
    <property type="project" value="Ensembl"/>
</dbReference>
<dbReference type="GO" id="GO:0019894">
    <property type="term" value="F:kinesin binding"/>
    <property type="evidence" value="ECO:0007669"/>
    <property type="project" value="Ensembl"/>
</dbReference>
<dbReference type="GO" id="GO:0000287">
    <property type="term" value="F:magnesium ion binding"/>
    <property type="evidence" value="ECO:0007669"/>
    <property type="project" value="Ensembl"/>
</dbReference>
<dbReference type="GO" id="GO:0016491">
    <property type="term" value="F:oxidoreductase activity"/>
    <property type="evidence" value="ECO:0007669"/>
    <property type="project" value="Ensembl"/>
</dbReference>
<dbReference type="GO" id="GO:0005543">
    <property type="term" value="F:phospholipid binding"/>
    <property type="evidence" value="ECO:0007669"/>
    <property type="project" value="Ensembl"/>
</dbReference>
<dbReference type="GO" id="GO:0051219">
    <property type="term" value="F:phosphoprotein binding"/>
    <property type="evidence" value="ECO:0007669"/>
    <property type="project" value="Ensembl"/>
</dbReference>
<dbReference type="GO" id="GO:0000149">
    <property type="term" value="F:SNARE binding"/>
    <property type="evidence" value="ECO:0007669"/>
    <property type="project" value="Ensembl"/>
</dbReference>
<dbReference type="GO" id="GO:0048156">
    <property type="term" value="F:tau protein binding"/>
    <property type="evidence" value="ECO:0007669"/>
    <property type="project" value="Ensembl"/>
</dbReference>
<dbReference type="GO" id="GO:0141108">
    <property type="term" value="F:transporter regulator activity"/>
    <property type="evidence" value="ECO:0007669"/>
    <property type="project" value="Ensembl"/>
</dbReference>
<dbReference type="GO" id="GO:0008270">
    <property type="term" value="F:zinc ion binding"/>
    <property type="evidence" value="ECO:0007669"/>
    <property type="project" value="Ensembl"/>
</dbReference>
<dbReference type="GO" id="GO:0008344">
    <property type="term" value="P:adult locomotory behavior"/>
    <property type="evidence" value="ECO:0007669"/>
    <property type="project" value="Ensembl"/>
</dbReference>
<dbReference type="GO" id="GO:0071280">
    <property type="term" value="P:cellular response to copper ion"/>
    <property type="evidence" value="ECO:0007669"/>
    <property type="project" value="Ensembl"/>
</dbReference>
<dbReference type="GO" id="GO:0034599">
    <property type="term" value="P:cellular response to oxidative stress"/>
    <property type="evidence" value="ECO:0007669"/>
    <property type="project" value="Ensembl"/>
</dbReference>
<dbReference type="GO" id="GO:0042416">
    <property type="term" value="P:dopamine biosynthetic process"/>
    <property type="evidence" value="ECO:0007669"/>
    <property type="project" value="Ensembl"/>
</dbReference>
<dbReference type="GO" id="GO:0060079">
    <property type="term" value="P:excitatory postsynaptic potential"/>
    <property type="evidence" value="ECO:0007669"/>
    <property type="project" value="Ensembl"/>
</dbReference>
<dbReference type="GO" id="GO:0006631">
    <property type="term" value="P:fatty acid metabolic process"/>
    <property type="evidence" value="ECO:0007669"/>
    <property type="project" value="Ensembl"/>
</dbReference>
<dbReference type="GO" id="GO:0060291">
    <property type="term" value="P:long-term synaptic potentiation"/>
    <property type="evidence" value="ECO:0007669"/>
    <property type="project" value="Ensembl"/>
</dbReference>
<dbReference type="GO" id="GO:0001774">
    <property type="term" value="P:microglial cell activation"/>
    <property type="evidence" value="ECO:0007669"/>
    <property type="project" value="Ensembl"/>
</dbReference>
<dbReference type="GO" id="GO:0042775">
    <property type="term" value="P:mitochondrial ATP synthesis coupled electron transport"/>
    <property type="evidence" value="ECO:0007669"/>
    <property type="project" value="Ensembl"/>
</dbReference>
<dbReference type="GO" id="GO:0007006">
    <property type="term" value="P:mitochondrial membrane organization"/>
    <property type="evidence" value="ECO:0007669"/>
    <property type="project" value="Ensembl"/>
</dbReference>
<dbReference type="GO" id="GO:1904715">
    <property type="term" value="P:negative regulation of chaperone-mediated autophagy"/>
    <property type="evidence" value="ECO:0007669"/>
    <property type="project" value="Ensembl"/>
</dbReference>
<dbReference type="GO" id="GO:0051585">
    <property type="term" value="P:negative regulation of dopamine uptake involved in synaptic transmission"/>
    <property type="evidence" value="ECO:0007669"/>
    <property type="project" value="Ensembl"/>
</dbReference>
<dbReference type="GO" id="GO:0045920">
    <property type="term" value="P:negative regulation of exocytosis"/>
    <property type="evidence" value="ECO:0007669"/>
    <property type="project" value="Ensembl"/>
</dbReference>
<dbReference type="GO" id="GO:0031115">
    <property type="term" value="P:negative regulation of microtubule polymerization"/>
    <property type="evidence" value="ECO:0007669"/>
    <property type="project" value="Ensembl"/>
</dbReference>
<dbReference type="GO" id="GO:0043524">
    <property type="term" value="P:negative regulation of neuron apoptotic process"/>
    <property type="evidence" value="ECO:0007669"/>
    <property type="project" value="Ensembl"/>
</dbReference>
<dbReference type="GO" id="GO:0051622">
    <property type="term" value="P:negative regulation of norepinephrine uptake"/>
    <property type="evidence" value="ECO:0007669"/>
    <property type="project" value="Ensembl"/>
</dbReference>
<dbReference type="GO" id="GO:0010642">
    <property type="term" value="P:negative regulation of platelet-derived growth factor receptor signaling pathway"/>
    <property type="evidence" value="ECO:0007669"/>
    <property type="project" value="Ensembl"/>
</dbReference>
<dbReference type="GO" id="GO:0051612">
    <property type="term" value="P:negative regulation of serotonin uptake"/>
    <property type="evidence" value="ECO:0007669"/>
    <property type="project" value="Ensembl"/>
</dbReference>
<dbReference type="GO" id="GO:0070495">
    <property type="term" value="P:negative regulation of thrombin-activated receptor signaling pathway"/>
    <property type="evidence" value="ECO:0007669"/>
    <property type="project" value="Ensembl"/>
</dbReference>
<dbReference type="GO" id="GO:0051402">
    <property type="term" value="P:neuron apoptotic process"/>
    <property type="evidence" value="ECO:0007669"/>
    <property type="project" value="Ensembl"/>
</dbReference>
<dbReference type="GO" id="GO:0006638">
    <property type="term" value="P:neutral lipid metabolic process"/>
    <property type="evidence" value="ECO:0007669"/>
    <property type="project" value="Ensembl"/>
</dbReference>
<dbReference type="GO" id="GO:0006644">
    <property type="term" value="P:phospholipid metabolic process"/>
    <property type="evidence" value="ECO:0007669"/>
    <property type="project" value="Ensembl"/>
</dbReference>
<dbReference type="GO" id="GO:0045807">
    <property type="term" value="P:positive regulation of endocytosis"/>
    <property type="evidence" value="ECO:0007669"/>
    <property type="project" value="Ensembl"/>
</dbReference>
<dbReference type="GO" id="GO:0045921">
    <property type="term" value="P:positive regulation of exocytosis"/>
    <property type="evidence" value="ECO:0007669"/>
    <property type="project" value="Ensembl"/>
</dbReference>
<dbReference type="GO" id="GO:1903285">
    <property type="term" value="P:positive regulation of hydrogen peroxide catabolic process"/>
    <property type="evidence" value="ECO:0007669"/>
    <property type="project" value="Ensembl"/>
</dbReference>
<dbReference type="GO" id="GO:0050729">
    <property type="term" value="P:positive regulation of inflammatory response"/>
    <property type="evidence" value="ECO:0007669"/>
    <property type="project" value="Ensembl"/>
</dbReference>
<dbReference type="GO" id="GO:0060732">
    <property type="term" value="P:positive regulation of inositol phosphate biosynthetic process"/>
    <property type="evidence" value="ECO:0007669"/>
    <property type="project" value="Ensembl"/>
</dbReference>
<dbReference type="GO" id="GO:0001956">
    <property type="term" value="P:positive regulation of neurotransmitter secretion"/>
    <property type="evidence" value="ECO:0007669"/>
    <property type="project" value="Ensembl"/>
</dbReference>
<dbReference type="GO" id="GO:1904377">
    <property type="term" value="P:positive regulation of protein localization to cell periphery"/>
    <property type="evidence" value="ECO:0007669"/>
    <property type="project" value="Ensembl"/>
</dbReference>
<dbReference type="GO" id="GO:0001921">
    <property type="term" value="P:positive regulation of receptor recycling"/>
    <property type="evidence" value="ECO:0007669"/>
    <property type="project" value="Ensembl"/>
</dbReference>
<dbReference type="GO" id="GO:0051281">
    <property type="term" value="P:positive regulation of release of sequestered calcium ion into cytosol"/>
    <property type="evidence" value="ECO:0007669"/>
    <property type="project" value="Ensembl"/>
</dbReference>
<dbReference type="GO" id="GO:0035543">
    <property type="term" value="P:positive regulation of SNARE complex assembly"/>
    <property type="evidence" value="ECO:0007669"/>
    <property type="project" value="Ensembl"/>
</dbReference>
<dbReference type="GO" id="GO:0031648">
    <property type="term" value="P:protein destabilization"/>
    <property type="evidence" value="ECO:0007669"/>
    <property type="project" value="Ensembl"/>
</dbReference>
<dbReference type="GO" id="GO:0051262">
    <property type="term" value="P:protein tetramerization"/>
    <property type="evidence" value="ECO:0007669"/>
    <property type="project" value="Ensembl"/>
</dbReference>
<dbReference type="GO" id="GO:0031623">
    <property type="term" value="P:receptor internalization"/>
    <property type="evidence" value="ECO:0007669"/>
    <property type="project" value="Ensembl"/>
</dbReference>
<dbReference type="GO" id="GO:0050812">
    <property type="term" value="P:regulation of acyl-CoA biosynthetic process"/>
    <property type="evidence" value="ECO:0007669"/>
    <property type="project" value="Ensembl"/>
</dbReference>
<dbReference type="GO" id="GO:0014059">
    <property type="term" value="P:regulation of dopamine secretion"/>
    <property type="evidence" value="ECO:0007669"/>
    <property type="project" value="Ensembl"/>
</dbReference>
<dbReference type="GO" id="GO:0014048">
    <property type="term" value="P:regulation of glutamate secretion"/>
    <property type="evidence" value="ECO:0007669"/>
    <property type="project" value="Ensembl"/>
</dbReference>
<dbReference type="GO" id="GO:0040012">
    <property type="term" value="P:regulation of locomotion"/>
    <property type="evidence" value="ECO:0007669"/>
    <property type="project" value="Ensembl"/>
</dbReference>
<dbReference type="GO" id="GO:0048169">
    <property type="term" value="P:regulation of long-term neuronal synaptic plasticity"/>
    <property type="evidence" value="ECO:0007669"/>
    <property type="project" value="Ensembl"/>
</dbReference>
<dbReference type="GO" id="GO:0043030">
    <property type="term" value="P:regulation of macrophage activation"/>
    <property type="evidence" value="ECO:0007669"/>
    <property type="project" value="Ensembl"/>
</dbReference>
<dbReference type="GO" id="GO:1905606">
    <property type="term" value="P:regulation of presynapse assembly"/>
    <property type="evidence" value="ECO:0007669"/>
    <property type="project" value="Ensembl"/>
</dbReference>
<dbReference type="GO" id="GO:0070555">
    <property type="term" value="P:response to interleukin-1"/>
    <property type="evidence" value="ECO:0007669"/>
    <property type="project" value="Ensembl"/>
</dbReference>
<dbReference type="GO" id="GO:0010040">
    <property type="term" value="P:response to iron(II) ion"/>
    <property type="evidence" value="ECO:0007669"/>
    <property type="project" value="Ensembl"/>
</dbReference>
<dbReference type="GO" id="GO:0032496">
    <property type="term" value="P:response to lipopolysaccharide"/>
    <property type="evidence" value="ECO:0007669"/>
    <property type="project" value="Ensembl"/>
</dbReference>
<dbReference type="GO" id="GO:0032026">
    <property type="term" value="P:response to magnesium ion"/>
    <property type="evidence" value="ECO:0007669"/>
    <property type="project" value="Ensembl"/>
</dbReference>
<dbReference type="GO" id="GO:0034341">
    <property type="term" value="P:response to type II interferon"/>
    <property type="evidence" value="ECO:0007669"/>
    <property type="project" value="Ensembl"/>
</dbReference>
<dbReference type="GO" id="GO:0009410">
    <property type="term" value="P:response to xenobiotic stimulus"/>
    <property type="evidence" value="ECO:0007669"/>
    <property type="project" value="Ensembl"/>
</dbReference>
<dbReference type="GO" id="GO:0035493">
    <property type="term" value="P:SNARE complex assembly"/>
    <property type="evidence" value="ECO:0007669"/>
    <property type="project" value="Ensembl"/>
</dbReference>
<dbReference type="GO" id="GO:0050808">
    <property type="term" value="P:synapse organization"/>
    <property type="evidence" value="ECO:0007669"/>
    <property type="project" value="Ensembl"/>
</dbReference>
<dbReference type="GO" id="GO:0001963">
    <property type="term" value="P:synaptic transmission, dopaminergic"/>
    <property type="evidence" value="ECO:0007669"/>
    <property type="project" value="Ensembl"/>
</dbReference>
<dbReference type="GO" id="GO:0048488">
    <property type="term" value="P:synaptic vesicle endocytosis"/>
    <property type="evidence" value="ECO:0007669"/>
    <property type="project" value="Ensembl"/>
</dbReference>
<dbReference type="GO" id="GO:0016082">
    <property type="term" value="P:synaptic vesicle priming"/>
    <property type="evidence" value="ECO:0007669"/>
    <property type="project" value="Ensembl"/>
</dbReference>
<dbReference type="GO" id="GO:0048489">
    <property type="term" value="P:synaptic vesicle transport"/>
    <property type="evidence" value="ECO:0007669"/>
    <property type="project" value="Ensembl"/>
</dbReference>
<dbReference type="FunFam" id="1.10.287.700:FF:000001">
    <property type="entry name" value="Alpha-synuclein"/>
    <property type="match status" value="1"/>
</dbReference>
<dbReference type="Gene3D" id="1.10.287.700">
    <property type="entry name" value="Helix hairpin bin"/>
    <property type="match status" value="1"/>
</dbReference>
<dbReference type="InterPro" id="IPR001058">
    <property type="entry name" value="Synuclein"/>
</dbReference>
<dbReference type="InterPro" id="IPR002460">
    <property type="entry name" value="Synuclein_alpha"/>
</dbReference>
<dbReference type="PANTHER" id="PTHR13820:SF5">
    <property type="entry name" value="ALPHA-SYNUCLEIN"/>
    <property type="match status" value="1"/>
</dbReference>
<dbReference type="PANTHER" id="PTHR13820">
    <property type="entry name" value="SYNUCLEIN"/>
    <property type="match status" value="1"/>
</dbReference>
<dbReference type="Pfam" id="PF01387">
    <property type="entry name" value="Synuclein"/>
    <property type="match status" value="1"/>
</dbReference>
<dbReference type="PRINTS" id="PR01212">
    <property type="entry name" value="ASYNUCLEIN"/>
</dbReference>
<dbReference type="PRINTS" id="PR01211">
    <property type="entry name" value="SYNUCLEIN"/>
</dbReference>
<dbReference type="SUPFAM" id="SSF118375">
    <property type="entry name" value="Synuclein"/>
    <property type="match status" value="1"/>
</dbReference>
<reference key="1">
    <citation type="journal article" date="1995" name="Neuron">
        <title>Characterization of a novel protein regulated during the critical period for song learning in the zebra finch.</title>
        <authorList>
            <person name="George J.M."/>
            <person name="Jin H."/>
            <person name="Woods W.S."/>
            <person name="Clayton D.F."/>
        </authorList>
    </citation>
    <scope>NUCLEOTIDE SEQUENCE [MRNA]</scope>
    <source>
        <tissue>Brain</tissue>
    </source>
</reference>
<feature type="chain" id="PRO_0000184033" description="Alpha-synuclein">
    <location>
        <begin position="1"/>
        <end position="143"/>
    </location>
</feature>
<feature type="repeat" description="1">
    <location>
        <begin position="20"/>
        <end position="30"/>
    </location>
</feature>
<feature type="repeat" description="2">
    <location>
        <begin position="31"/>
        <end position="41"/>
    </location>
</feature>
<feature type="repeat" description="3; approximate">
    <location>
        <begin position="42"/>
        <end position="56"/>
    </location>
</feature>
<feature type="repeat" description="4">
    <location>
        <begin position="57"/>
        <end position="67"/>
    </location>
</feature>
<feature type="region of interest" description="4 X 11 AA tandem repeats of [EGS]-K-T-K-[EQ]-[GQ]-V-X(4)">
    <location>
        <begin position="20"/>
        <end position="67"/>
    </location>
</feature>
<feature type="region of interest" description="Disordered" evidence="3">
    <location>
        <begin position="116"/>
        <end position="143"/>
    </location>
</feature>
<feature type="compositionally biased region" description="Acidic residues" evidence="3">
    <location>
        <begin position="123"/>
        <end position="143"/>
    </location>
</feature>
<feature type="binding site" evidence="1">
    <location>
        <position position="2"/>
    </location>
    <ligand>
        <name>Cu cation</name>
        <dbReference type="ChEBI" id="CHEBI:23378"/>
    </ligand>
</feature>
<feature type="binding site" evidence="1">
    <location>
        <position position="50"/>
    </location>
    <ligand>
        <name>Cu cation</name>
        <dbReference type="ChEBI" id="CHEBI:23378"/>
    </ligand>
</feature>
<feature type="modified residue" description="N-acetylmethionine" evidence="1">
    <location>
        <position position="1"/>
    </location>
</feature>
<comment type="function">
    <text>May be involved in the regulation of dopamine release and transport.</text>
</comment>
<comment type="function">
    <text>May be involved in neuronal plasticity.</text>
</comment>
<comment type="subcellular location">
    <subcellularLocation>
        <location evidence="2">Cytoplasm</location>
        <location evidence="2">Cytosol</location>
    </subcellularLocation>
    <subcellularLocation>
        <location evidence="2">Membrane</location>
    </subcellularLocation>
    <subcellularLocation>
        <location evidence="2">Nucleus</location>
    </subcellularLocation>
    <subcellularLocation>
        <location evidence="2">Synapse</location>
    </subcellularLocation>
    <subcellularLocation>
        <location evidence="2">Secreted</location>
    </subcellularLocation>
</comment>
<comment type="tissue specificity">
    <text>Brain.</text>
</comment>
<comment type="PTM">
    <text evidence="1">Acetylation at Met-1 seems to be important for proper folding and native oligomeric structure.</text>
</comment>
<comment type="similarity">
    <text evidence="4">Belongs to the synuclein family.</text>
</comment>
<sequence length="143" mass="14874">MDVFMKGLSKAKEGVVAAAEKTKQGVAEAAGKTKEGVLYVGSRTKEGVVHGVTTVAEKTKEQVSNVGGAVVTGVTAVAQKTVEGAGNIAAATGLVKKDQLAKQNEEGFLQEGMVNNTGAAVDPDNEAYEMPPEEEYQDYEPEA</sequence>
<gene>
    <name type="primary">SNCA</name>
</gene>
<organism>
    <name type="scientific">Serinus canaria</name>
    <name type="common">Island canary</name>
    <name type="synonym">Fringilla canaria</name>
    <dbReference type="NCBI Taxonomy" id="9135"/>
    <lineage>
        <taxon>Eukaryota</taxon>
        <taxon>Metazoa</taxon>
        <taxon>Chordata</taxon>
        <taxon>Craniata</taxon>
        <taxon>Vertebrata</taxon>
        <taxon>Euteleostomi</taxon>
        <taxon>Archelosauria</taxon>
        <taxon>Archosauria</taxon>
        <taxon>Dinosauria</taxon>
        <taxon>Saurischia</taxon>
        <taxon>Theropoda</taxon>
        <taxon>Coelurosauria</taxon>
        <taxon>Aves</taxon>
        <taxon>Neognathae</taxon>
        <taxon>Neoaves</taxon>
        <taxon>Telluraves</taxon>
        <taxon>Australaves</taxon>
        <taxon>Passeriformes</taxon>
        <taxon>Passeroidea</taxon>
        <taxon>Fringillidae</taxon>
        <taxon>Carduelinae</taxon>
        <taxon>Serinus</taxon>
    </lineage>
</organism>
<keyword id="KW-0007">Acetylation</keyword>
<keyword id="KW-0186">Copper</keyword>
<keyword id="KW-0963">Cytoplasm</keyword>
<keyword id="KW-0472">Membrane</keyword>
<keyword id="KW-0479">Metal-binding</keyword>
<keyword id="KW-0539">Nucleus</keyword>
<keyword id="KW-1185">Reference proteome</keyword>
<keyword id="KW-0677">Repeat</keyword>
<keyword id="KW-0964">Secreted</keyword>
<keyword id="KW-0770">Synapse</keyword>
<proteinExistence type="evidence at transcript level"/>